<organism>
    <name type="scientific">Shigella flexneri</name>
    <dbReference type="NCBI Taxonomy" id="623"/>
    <lineage>
        <taxon>Bacteria</taxon>
        <taxon>Pseudomonadati</taxon>
        <taxon>Pseudomonadota</taxon>
        <taxon>Gammaproteobacteria</taxon>
        <taxon>Enterobacterales</taxon>
        <taxon>Enterobacteriaceae</taxon>
        <taxon>Shigella</taxon>
    </lineage>
</organism>
<gene>
    <name evidence="1" type="primary">mdoB</name>
    <name evidence="1" type="synonym">opgB</name>
    <name type="ordered locus">SF4390</name>
    <name type="ordered locus">S4660</name>
</gene>
<keyword id="KW-0997">Cell inner membrane</keyword>
<keyword id="KW-1003">Cell membrane</keyword>
<keyword id="KW-0472">Membrane</keyword>
<keyword id="KW-1185">Reference proteome</keyword>
<keyword id="KW-0808">Transferase</keyword>
<keyword id="KW-0812">Transmembrane</keyword>
<keyword id="KW-1133">Transmembrane helix</keyword>
<comment type="function">
    <text evidence="1">Transfers a phosphoglycerol residue from phosphatidylglycerol to the membrane-bound nascent glucan backbones.</text>
</comment>
<comment type="catalytic activity">
    <reaction evidence="1">
        <text>a phosphatidylglycerol + a membrane-derived-oligosaccharide D-glucose = a 1,2-diacyl-sn-glycerol + a membrane-derived-oligosaccharide 6-(glycerophospho)-D-glucose.</text>
        <dbReference type="EC" id="2.7.8.20"/>
    </reaction>
</comment>
<comment type="pathway">
    <text evidence="1">Glycan metabolism; osmoregulated periplasmic glucan (OPG) biosynthesis.</text>
</comment>
<comment type="subcellular location">
    <subcellularLocation>
        <location evidence="1">Cell inner membrane</location>
        <topology evidence="1">Multi-pass membrane protein</topology>
    </subcellularLocation>
</comment>
<comment type="similarity">
    <text evidence="1">Belongs to the OpgB family.</text>
</comment>
<comment type="sequence caution" evidence="2">
    <conflict type="erroneous initiation">
        <sequence resource="EMBL-CDS" id="AAN45805"/>
    </conflict>
    <text>Truncated N-terminus.</text>
</comment>
<comment type="sequence caution" evidence="2">
    <conflict type="erroneous initiation">
        <sequence resource="EMBL-CDS" id="AAP19583"/>
    </conflict>
    <text>Truncated N-terminus.</text>
</comment>
<name>OPGB_SHIFL</name>
<reference key="1">
    <citation type="journal article" date="2002" name="Nucleic Acids Res.">
        <title>Genome sequence of Shigella flexneri 2a: insights into pathogenicity through comparison with genomes of Escherichia coli K12 and O157.</title>
        <authorList>
            <person name="Jin Q."/>
            <person name="Yuan Z."/>
            <person name="Xu J."/>
            <person name="Wang Y."/>
            <person name="Shen Y."/>
            <person name="Lu W."/>
            <person name="Wang J."/>
            <person name="Liu H."/>
            <person name="Yang J."/>
            <person name="Yang F."/>
            <person name="Zhang X."/>
            <person name="Zhang J."/>
            <person name="Yang G."/>
            <person name="Wu H."/>
            <person name="Qu D."/>
            <person name="Dong J."/>
            <person name="Sun L."/>
            <person name="Xue Y."/>
            <person name="Zhao A."/>
            <person name="Gao Y."/>
            <person name="Zhu J."/>
            <person name="Kan B."/>
            <person name="Ding K."/>
            <person name="Chen S."/>
            <person name="Cheng H."/>
            <person name="Yao Z."/>
            <person name="He B."/>
            <person name="Chen R."/>
            <person name="Ma D."/>
            <person name="Qiang B."/>
            <person name="Wen Y."/>
            <person name="Hou Y."/>
            <person name="Yu J."/>
        </authorList>
    </citation>
    <scope>NUCLEOTIDE SEQUENCE [LARGE SCALE GENOMIC DNA]</scope>
    <source>
        <strain>301 / Serotype 2a</strain>
    </source>
</reference>
<reference key="2">
    <citation type="journal article" date="2003" name="Infect. Immun.">
        <title>Complete genome sequence and comparative genomics of Shigella flexneri serotype 2a strain 2457T.</title>
        <authorList>
            <person name="Wei J."/>
            <person name="Goldberg M.B."/>
            <person name="Burland V."/>
            <person name="Venkatesan M.M."/>
            <person name="Deng W."/>
            <person name="Fournier G."/>
            <person name="Mayhew G.F."/>
            <person name="Plunkett G. III"/>
            <person name="Rose D.J."/>
            <person name="Darling A."/>
            <person name="Mau B."/>
            <person name="Perna N.T."/>
            <person name="Payne S.M."/>
            <person name="Runyen-Janecky L.J."/>
            <person name="Zhou S."/>
            <person name="Schwartz D.C."/>
            <person name="Blattner F.R."/>
        </authorList>
    </citation>
    <scope>NUCLEOTIDE SEQUENCE [LARGE SCALE GENOMIC DNA]</scope>
    <source>
        <strain>ATCC 700930 / 2457T / Serotype 2a</strain>
    </source>
</reference>
<evidence type="ECO:0000255" key="1">
    <source>
        <dbReference type="HAMAP-Rule" id="MF_01070"/>
    </source>
</evidence>
<evidence type="ECO:0000305" key="2"/>
<accession>Q83IH7</accession>
<sequence length="763" mass="85454">MSELLSFALFLASVLIYAWKAGRNTWWFAATLTVLGLFVVLNITLFASDYFTGDGINDAVLYTLTNSLTGAGVSKYILPGIGIVLGLTAVFGALGWILRRRRHHPHHFGYSLLALLLALGSVDASPAFRQITELVKSQSRDGDPDFAAYYKEPSKTIPDPKLNLVYIYGESLERTYFDNEAFPDLTPELGALKNEGLDFSHTQQLPGTDYTIAGMVASQCGIPLFAPFEGNASASVSSFFPQNICLGDILKNSGYQNYFVQGANLRFAGKDVFLKSHGFDHLYGSEELKSVVADPHYRNDWGFYDDTVLDEAWKKFEELSRSGQRFSLFTLTVDTHHPDGFISRTCNRKKYDFDGKPNQSFSAVSCSQENIATFINKIKASPWFKDTVIVVSSDHLAMNNTAWKYLNKQDRNNLFFVIRGDKPQQKTLAVKRNTMDNGATVLDILGGDNYLGLGRSSLSGQSMSEIFLNIKEKTLAWKPDIIRLWKFPKEMKEFTIDQQKNMIAFSGSHFRLPLLLRVSDKRVEPLPESEYSAPLRFQLADFAPRDNFVWVDSCYKMAQLWAPELALSTDWCVSQGQLGGQQIVQHVDKTTWKSKTAFKDTVIDMARYKGNVDTLKIVDNDIRYKADSFIFNVAGAPEEVKQFSGISRPESWGRWSNAQLGDEVKIEYKHPLPKKFDLVITAKAYGNNASRPIPVRVGNEEQTLVLGNEVTTTTLHFDNPTDADTLVIVPPEPVSTNEGNILGHSPRKLGIGMVEIKVVEREG</sequence>
<feature type="chain" id="PRO_0000213064" description="Phosphoglycerol transferase I">
    <location>
        <begin position="1"/>
        <end position="763"/>
    </location>
</feature>
<feature type="transmembrane region" description="Helical" evidence="1">
    <location>
        <begin position="4"/>
        <end position="19"/>
    </location>
</feature>
<feature type="transmembrane region" description="Helical" evidence="1">
    <location>
        <begin position="26"/>
        <end position="48"/>
    </location>
</feature>
<feature type="transmembrane region" description="Helical" evidence="1">
    <location>
        <begin position="76"/>
        <end position="98"/>
    </location>
</feature>
<feature type="transmembrane region" description="Helical" evidence="1">
    <location>
        <begin position="105"/>
        <end position="127"/>
    </location>
</feature>
<protein>
    <recommendedName>
        <fullName evidence="1">Phosphoglycerol transferase I</fullName>
        <ecNumber evidence="1">2.7.8.20</ecNumber>
    </recommendedName>
    <alternativeName>
        <fullName evidence="1">Phosphatidylglycerol--membrane-oligosaccharide glycerophosphotransferase</fullName>
    </alternativeName>
</protein>
<proteinExistence type="inferred from homology"/>
<dbReference type="EC" id="2.7.8.20" evidence="1"/>
<dbReference type="EMBL" id="AE005674">
    <property type="protein sequence ID" value="AAN45805.2"/>
    <property type="status" value="ALT_INIT"/>
    <property type="molecule type" value="Genomic_DNA"/>
</dbReference>
<dbReference type="EMBL" id="AE014073">
    <property type="protein sequence ID" value="AAP19583.1"/>
    <property type="status" value="ALT_INIT"/>
    <property type="molecule type" value="Genomic_DNA"/>
</dbReference>
<dbReference type="RefSeq" id="NP_710098.4">
    <property type="nucleotide sequence ID" value="NC_004337.2"/>
</dbReference>
<dbReference type="RefSeq" id="WP_001292683.1">
    <property type="nucleotide sequence ID" value="NZ_WPGW01000045.1"/>
</dbReference>
<dbReference type="SMR" id="Q83IH7"/>
<dbReference type="STRING" id="198214.SF4390"/>
<dbReference type="PaxDb" id="198214-SF4390"/>
<dbReference type="GeneID" id="1025058"/>
<dbReference type="KEGG" id="sfl:SF4390"/>
<dbReference type="KEGG" id="sfx:S4660"/>
<dbReference type="PATRIC" id="fig|198214.7.peg.5176"/>
<dbReference type="HOGENOM" id="CLU_023986_1_0_6"/>
<dbReference type="UniPathway" id="UPA00637"/>
<dbReference type="Proteomes" id="UP000001006">
    <property type="component" value="Chromosome"/>
</dbReference>
<dbReference type="Proteomes" id="UP000002673">
    <property type="component" value="Chromosome"/>
</dbReference>
<dbReference type="GO" id="GO:0005886">
    <property type="term" value="C:plasma membrane"/>
    <property type="evidence" value="ECO:0007669"/>
    <property type="project" value="UniProtKB-SubCell"/>
</dbReference>
<dbReference type="GO" id="GO:0008960">
    <property type="term" value="F:phosphatidylglycerol-membrane-oligosaccharide glycerophosphotransferase activity"/>
    <property type="evidence" value="ECO:0007669"/>
    <property type="project" value="UniProtKB-UniRule"/>
</dbReference>
<dbReference type="GO" id="GO:0009250">
    <property type="term" value="P:glucan biosynthetic process"/>
    <property type="evidence" value="ECO:0007669"/>
    <property type="project" value="UniProtKB-UniRule"/>
</dbReference>
<dbReference type="CDD" id="cd16015">
    <property type="entry name" value="LTA_synthase"/>
    <property type="match status" value="1"/>
</dbReference>
<dbReference type="FunFam" id="3.40.720.10:FF:000009">
    <property type="entry name" value="Phosphoglycerol transferase I"/>
    <property type="match status" value="1"/>
</dbReference>
<dbReference type="Gene3D" id="3.40.720.10">
    <property type="entry name" value="Alkaline Phosphatase, subunit A"/>
    <property type="match status" value="1"/>
</dbReference>
<dbReference type="HAMAP" id="MF_01070">
    <property type="entry name" value="MdoB_OpgB"/>
    <property type="match status" value="1"/>
</dbReference>
<dbReference type="InterPro" id="IPR017850">
    <property type="entry name" value="Alkaline_phosphatase_core_sf"/>
</dbReference>
<dbReference type="InterPro" id="IPR054288">
    <property type="entry name" value="DUF7024"/>
</dbReference>
<dbReference type="InterPro" id="IPR020881">
    <property type="entry name" value="OpgB"/>
</dbReference>
<dbReference type="InterPro" id="IPR050448">
    <property type="entry name" value="OpgB/LTA_synthase_biosynth"/>
</dbReference>
<dbReference type="InterPro" id="IPR000917">
    <property type="entry name" value="Sulfatase_N"/>
</dbReference>
<dbReference type="NCBIfam" id="NF003000">
    <property type="entry name" value="PRK03776.1"/>
    <property type="match status" value="1"/>
</dbReference>
<dbReference type="PANTHER" id="PTHR47371">
    <property type="entry name" value="LIPOTEICHOIC ACID SYNTHASE"/>
    <property type="match status" value="1"/>
</dbReference>
<dbReference type="PANTHER" id="PTHR47371:SF3">
    <property type="entry name" value="PHOSPHOGLYCEROL TRANSFERASE I"/>
    <property type="match status" value="1"/>
</dbReference>
<dbReference type="Pfam" id="PF22895">
    <property type="entry name" value="DUF7024"/>
    <property type="match status" value="1"/>
</dbReference>
<dbReference type="Pfam" id="PF00884">
    <property type="entry name" value="Sulfatase"/>
    <property type="match status" value="1"/>
</dbReference>
<dbReference type="SUPFAM" id="SSF53649">
    <property type="entry name" value="Alkaline phosphatase-like"/>
    <property type="match status" value="1"/>
</dbReference>